<sequence>MALTSFLPAPTQLSQDQLEAEERARSQRSLQTSLVSSRREPPPYGYRKGWIPRLLEDFGDGGAFPEIHVAQYPLDMGRKKKMSNALAIQVDPEGKIKYDAIARQGQSKDKVIYSKYTDLVPKEVMNADDPDLQRPDEEAIKEITEKTRVALEKSVSQKVAAAMPVRAADKLAPAQYIRYTPSQQGVAFNSGAKQRVIRMVEMQKEPMEPPRFKINKKIPRGPPSPPAPVMHSPSRKMTVKEQQEWKIPPCISNWKNAKGYTIPIDKRLAADGRGLQTVHINENFAKLAEALYIADRKAREAVEMRAQVERKMAQKEKEKHEEKLREMAQKARERRAGIKTHVEKEDGEARERDEIRHDRRKERQHDRNLSRAAPDKRSKLQRNENRDISEVIALGVPNPRTSNEVQYDQRLFNQSKGMDSGFAGGEDEIYNVYDQAWRGGKDMAQSIYRPSKNLDKDMYGDDLEARIKTNRFVPDKEFSGSDRKQRGREGPVQFEEDPFGLDKFLEEAKQHGGSKRPSDSSRPKEHEHEGKKRRKE</sequence>
<reference key="1">
    <citation type="journal article" date="2005" name="Science">
        <title>The transcriptional landscape of the mammalian genome.</title>
        <authorList>
            <person name="Carninci P."/>
            <person name="Kasukawa T."/>
            <person name="Katayama S."/>
            <person name="Gough J."/>
            <person name="Frith M.C."/>
            <person name="Maeda N."/>
            <person name="Oyama R."/>
            <person name="Ravasi T."/>
            <person name="Lenhard B."/>
            <person name="Wells C."/>
            <person name="Kodzius R."/>
            <person name="Shimokawa K."/>
            <person name="Bajic V.B."/>
            <person name="Brenner S.E."/>
            <person name="Batalov S."/>
            <person name="Forrest A.R."/>
            <person name="Zavolan M."/>
            <person name="Davis M.J."/>
            <person name="Wilming L.G."/>
            <person name="Aidinis V."/>
            <person name="Allen J.E."/>
            <person name="Ambesi-Impiombato A."/>
            <person name="Apweiler R."/>
            <person name="Aturaliya R.N."/>
            <person name="Bailey T.L."/>
            <person name="Bansal M."/>
            <person name="Baxter L."/>
            <person name="Beisel K.W."/>
            <person name="Bersano T."/>
            <person name="Bono H."/>
            <person name="Chalk A.M."/>
            <person name="Chiu K.P."/>
            <person name="Choudhary V."/>
            <person name="Christoffels A."/>
            <person name="Clutterbuck D.R."/>
            <person name="Crowe M.L."/>
            <person name="Dalla E."/>
            <person name="Dalrymple B.P."/>
            <person name="de Bono B."/>
            <person name="Della Gatta G."/>
            <person name="di Bernardo D."/>
            <person name="Down T."/>
            <person name="Engstrom P."/>
            <person name="Fagiolini M."/>
            <person name="Faulkner G."/>
            <person name="Fletcher C.F."/>
            <person name="Fukushima T."/>
            <person name="Furuno M."/>
            <person name="Futaki S."/>
            <person name="Gariboldi M."/>
            <person name="Georgii-Hemming P."/>
            <person name="Gingeras T.R."/>
            <person name="Gojobori T."/>
            <person name="Green R.E."/>
            <person name="Gustincich S."/>
            <person name="Harbers M."/>
            <person name="Hayashi Y."/>
            <person name="Hensch T.K."/>
            <person name="Hirokawa N."/>
            <person name="Hill D."/>
            <person name="Huminiecki L."/>
            <person name="Iacono M."/>
            <person name="Ikeo K."/>
            <person name="Iwama A."/>
            <person name="Ishikawa T."/>
            <person name="Jakt M."/>
            <person name="Kanapin A."/>
            <person name="Katoh M."/>
            <person name="Kawasawa Y."/>
            <person name="Kelso J."/>
            <person name="Kitamura H."/>
            <person name="Kitano H."/>
            <person name="Kollias G."/>
            <person name="Krishnan S.P."/>
            <person name="Kruger A."/>
            <person name="Kummerfeld S.K."/>
            <person name="Kurochkin I.V."/>
            <person name="Lareau L.F."/>
            <person name="Lazarevic D."/>
            <person name="Lipovich L."/>
            <person name="Liu J."/>
            <person name="Liuni S."/>
            <person name="McWilliam S."/>
            <person name="Madan Babu M."/>
            <person name="Madera M."/>
            <person name="Marchionni L."/>
            <person name="Matsuda H."/>
            <person name="Matsuzawa S."/>
            <person name="Miki H."/>
            <person name="Mignone F."/>
            <person name="Miyake S."/>
            <person name="Morris K."/>
            <person name="Mottagui-Tabar S."/>
            <person name="Mulder N."/>
            <person name="Nakano N."/>
            <person name="Nakauchi H."/>
            <person name="Ng P."/>
            <person name="Nilsson R."/>
            <person name="Nishiguchi S."/>
            <person name="Nishikawa S."/>
            <person name="Nori F."/>
            <person name="Ohara O."/>
            <person name="Okazaki Y."/>
            <person name="Orlando V."/>
            <person name="Pang K.C."/>
            <person name="Pavan W.J."/>
            <person name="Pavesi G."/>
            <person name="Pesole G."/>
            <person name="Petrovsky N."/>
            <person name="Piazza S."/>
            <person name="Reed J."/>
            <person name="Reid J.F."/>
            <person name="Ring B.Z."/>
            <person name="Ringwald M."/>
            <person name="Rost B."/>
            <person name="Ruan Y."/>
            <person name="Salzberg S.L."/>
            <person name="Sandelin A."/>
            <person name="Schneider C."/>
            <person name="Schoenbach C."/>
            <person name="Sekiguchi K."/>
            <person name="Semple C.A."/>
            <person name="Seno S."/>
            <person name="Sessa L."/>
            <person name="Sheng Y."/>
            <person name="Shibata Y."/>
            <person name="Shimada H."/>
            <person name="Shimada K."/>
            <person name="Silva D."/>
            <person name="Sinclair B."/>
            <person name="Sperling S."/>
            <person name="Stupka E."/>
            <person name="Sugiura K."/>
            <person name="Sultana R."/>
            <person name="Takenaka Y."/>
            <person name="Taki K."/>
            <person name="Tammoja K."/>
            <person name="Tan S.L."/>
            <person name="Tang S."/>
            <person name="Taylor M.S."/>
            <person name="Tegner J."/>
            <person name="Teichmann S.A."/>
            <person name="Ueda H.R."/>
            <person name="van Nimwegen E."/>
            <person name="Verardo R."/>
            <person name="Wei C.L."/>
            <person name="Yagi K."/>
            <person name="Yamanishi H."/>
            <person name="Zabarovsky E."/>
            <person name="Zhu S."/>
            <person name="Zimmer A."/>
            <person name="Hide W."/>
            <person name="Bult C."/>
            <person name="Grimmond S.M."/>
            <person name="Teasdale R.D."/>
            <person name="Liu E.T."/>
            <person name="Brusic V."/>
            <person name="Quackenbush J."/>
            <person name="Wahlestedt C."/>
            <person name="Mattick J.S."/>
            <person name="Hume D.A."/>
            <person name="Kai C."/>
            <person name="Sasaki D."/>
            <person name="Tomaru Y."/>
            <person name="Fukuda S."/>
            <person name="Kanamori-Katayama M."/>
            <person name="Suzuki M."/>
            <person name="Aoki J."/>
            <person name="Arakawa T."/>
            <person name="Iida J."/>
            <person name="Imamura K."/>
            <person name="Itoh M."/>
            <person name="Kato T."/>
            <person name="Kawaji H."/>
            <person name="Kawagashira N."/>
            <person name="Kawashima T."/>
            <person name="Kojima M."/>
            <person name="Kondo S."/>
            <person name="Konno H."/>
            <person name="Nakano K."/>
            <person name="Ninomiya N."/>
            <person name="Nishio T."/>
            <person name="Okada M."/>
            <person name="Plessy C."/>
            <person name="Shibata K."/>
            <person name="Shiraki T."/>
            <person name="Suzuki S."/>
            <person name="Tagami M."/>
            <person name="Waki K."/>
            <person name="Watahiki A."/>
            <person name="Okamura-Oho Y."/>
            <person name="Suzuki H."/>
            <person name="Kawai J."/>
            <person name="Hayashizaki Y."/>
        </authorList>
    </citation>
    <scope>NUCLEOTIDE SEQUENCE [LARGE SCALE MRNA]</scope>
    <source>
        <strain>C57BL/6J</strain>
        <tissue>Embryo</tissue>
    </source>
</reference>
<reference key="2">
    <citation type="journal article" date="2005" name="FEBS Lett.">
        <title>The death domain-associated protein modulates activity of the transcription co-factor Skip/NcoA62.</title>
        <authorList>
            <person name="Tang J."/>
            <person name="Chang H.Y."/>
            <person name="Yang X."/>
        </authorList>
    </citation>
    <scope>INTERACTION WITH DAXX</scope>
    <scope>PHOSPHORYLATION AT SER-224</scope>
</reference>
<reference key="3">
    <citation type="journal article" date="2007" name="Proc. Natl. Acad. Sci. U.S.A.">
        <title>Evolution of Na,K-ATPase betam-subunit into a coregulator of transcription in placental mammals.</title>
        <authorList>
            <person name="Pestov N.B."/>
            <person name="Ahmad N."/>
            <person name="Korneenko T.V."/>
            <person name="Zhao H."/>
            <person name="Radkov R."/>
            <person name="Schaer D."/>
            <person name="Roy S."/>
            <person name="Bibert S."/>
            <person name="Geering K."/>
            <person name="Modyanov N.N."/>
        </authorList>
    </citation>
    <scope>INTERACTION WITH ATP1B4</scope>
</reference>
<reference key="4">
    <citation type="journal article" date="2009" name="Immunity">
        <title>The phagosomal proteome in interferon-gamma-activated macrophages.</title>
        <authorList>
            <person name="Trost M."/>
            <person name="English L."/>
            <person name="Lemieux S."/>
            <person name="Courcelles M."/>
            <person name="Desjardins M."/>
            <person name="Thibault P."/>
        </authorList>
    </citation>
    <scope>PHOSPHORYLATION [LARGE SCALE ANALYSIS] AT SER-224 AND SER-232</scope>
    <scope>IDENTIFICATION BY MASS SPECTROMETRY [LARGE SCALE ANALYSIS]</scope>
</reference>
<reference key="5">
    <citation type="journal article" date="2009" name="Mol. Cell. Proteomics">
        <title>Large scale localization of protein phosphorylation by use of electron capture dissociation mass spectrometry.</title>
        <authorList>
            <person name="Sweet S.M."/>
            <person name="Bailey C.M."/>
            <person name="Cunningham D.L."/>
            <person name="Heath J.K."/>
            <person name="Cooper H.J."/>
        </authorList>
    </citation>
    <scope>PHOSPHORYLATION [LARGE SCALE ANALYSIS] AT SER-224 AND SER-232</scope>
    <scope>IDENTIFICATION BY MASS SPECTROMETRY [LARGE SCALE ANALYSIS]</scope>
    <source>
        <tissue>Embryonic fibroblast</tissue>
    </source>
</reference>
<reference key="6">
    <citation type="journal article" date="2010" name="Cell">
        <title>A tissue-specific atlas of mouse protein phosphorylation and expression.</title>
        <authorList>
            <person name="Huttlin E.L."/>
            <person name="Jedrychowski M.P."/>
            <person name="Elias J.E."/>
            <person name="Goswami T."/>
            <person name="Rad R."/>
            <person name="Beausoleil S.A."/>
            <person name="Villen J."/>
            <person name="Haas W."/>
            <person name="Sowa M.E."/>
            <person name="Gygi S.P."/>
        </authorList>
    </citation>
    <scope>PHOSPHORYLATION [LARGE SCALE ANALYSIS] AT SER-224 AND SER-232</scope>
    <scope>IDENTIFICATION BY MASS SPECTROMETRY [LARGE SCALE ANALYSIS]</scope>
    <source>
        <tissue>Brain</tissue>
        <tissue>Brown adipose tissue</tissue>
        <tissue>Heart</tissue>
        <tissue>Kidney</tissue>
        <tissue>Lung</tissue>
        <tissue>Pancreas</tissue>
        <tissue>Spleen</tissue>
        <tissue>Testis</tissue>
    </source>
</reference>
<dbReference type="EMBL" id="AK012384">
    <property type="protein sequence ID" value="BAB28203.2"/>
    <property type="molecule type" value="mRNA"/>
</dbReference>
<dbReference type="EMBL" id="BY734581">
    <property type="status" value="NOT_ANNOTATED_CDS"/>
    <property type="molecule type" value="mRNA"/>
</dbReference>
<dbReference type="CCDS" id="CCDS49121.1"/>
<dbReference type="RefSeq" id="NP_079783.2">
    <property type="nucleotide sequence ID" value="NM_025507.2"/>
</dbReference>
<dbReference type="SMR" id="Q9CSN1"/>
<dbReference type="BioGRID" id="211406">
    <property type="interactions" value="92"/>
</dbReference>
<dbReference type="DIP" id="DIP-42051N"/>
<dbReference type="FunCoup" id="Q9CSN1">
    <property type="interactions" value="3409"/>
</dbReference>
<dbReference type="IntAct" id="Q9CSN1">
    <property type="interactions" value="62"/>
</dbReference>
<dbReference type="MINT" id="Q9CSN1"/>
<dbReference type="STRING" id="10090.ENSMUSP00000021428"/>
<dbReference type="GlyGen" id="Q9CSN1">
    <property type="glycosylation" value="2 sites, 1 N-linked glycan (1 site), 1 O-linked glycan (1 site)"/>
</dbReference>
<dbReference type="iPTMnet" id="Q9CSN1"/>
<dbReference type="PhosphoSitePlus" id="Q9CSN1"/>
<dbReference type="jPOST" id="Q9CSN1"/>
<dbReference type="PaxDb" id="10090-ENSMUSP00000021428"/>
<dbReference type="PeptideAtlas" id="Q9CSN1"/>
<dbReference type="ProteomicsDB" id="261299"/>
<dbReference type="Pumba" id="Q9CSN1"/>
<dbReference type="DNASU" id="66354"/>
<dbReference type="GeneID" id="66354"/>
<dbReference type="KEGG" id="mmu:66354"/>
<dbReference type="UCSC" id="uc007ojf.1">
    <property type="organism name" value="mouse"/>
</dbReference>
<dbReference type="AGR" id="MGI:1913604"/>
<dbReference type="CTD" id="22938"/>
<dbReference type="MGI" id="MGI:1913604">
    <property type="gene designation" value="Snw1"/>
</dbReference>
<dbReference type="eggNOG" id="KOG2441">
    <property type="taxonomic scope" value="Eukaryota"/>
</dbReference>
<dbReference type="InParanoid" id="Q9CSN1"/>
<dbReference type="OrthoDB" id="666364at2759"/>
<dbReference type="PhylomeDB" id="Q9CSN1"/>
<dbReference type="Reactome" id="R-MMU-2122947">
    <property type="pathway name" value="NOTCH1 Intracellular Domain Regulates Transcription"/>
</dbReference>
<dbReference type="Reactome" id="R-MMU-2173795">
    <property type="pathway name" value="Downregulation of SMAD2/3:SMAD4 transcriptional activity"/>
</dbReference>
<dbReference type="Reactome" id="R-MMU-350054">
    <property type="pathway name" value="Notch-HLH transcription pathway"/>
</dbReference>
<dbReference type="Reactome" id="R-MMU-72163">
    <property type="pathway name" value="mRNA Splicing - Major Pathway"/>
</dbReference>
<dbReference type="Reactome" id="R-MMU-8941856">
    <property type="pathway name" value="RUNX3 regulates NOTCH signaling"/>
</dbReference>
<dbReference type="BioGRID-ORCS" id="66354">
    <property type="hits" value="23 hits in 81 CRISPR screens"/>
</dbReference>
<dbReference type="ChiTaRS" id="Snw1">
    <property type="organism name" value="mouse"/>
</dbReference>
<dbReference type="PRO" id="PR:Q9CSN1"/>
<dbReference type="Proteomes" id="UP000000589">
    <property type="component" value="Unplaced"/>
</dbReference>
<dbReference type="RNAct" id="Q9CSN1">
    <property type="molecule type" value="protein"/>
</dbReference>
<dbReference type="GO" id="GO:0016363">
    <property type="term" value="C:nuclear matrix"/>
    <property type="evidence" value="ECO:0000250"/>
    <property type="project" value="UniProtKB"/>
</dbReference>
<dbReference type="GO" id="GO:0005654">
    <property type="term" value="C:nucleoplasm"/>
    <property type="evidence" value="ECO:0000304"/>
    <property type="project" value="Reactome"/>
</dbReference>
<dbReference type="GO" id="GO:0005634">
    <property type="term" value="C:nucleus"/>
    <property type="evidence" value="ECO:0000250"/>
    <property type="project" value="UniProtKB"/>
</dbReference>
<dbReference type="GO" id="GO:0071007">
    <property type="term" value="C:U2-type catalytic step 2 spliceosome"/>
    <property type="evidence" value="ECO:0000250"/>
    <property type="project" value="UniProtKB"/>
</dbReference>
<dbReference type="GO" id="GO:0016922">
    <property type="term" value="F:nuclear receptor binding"/>
    <property type="evidence" value="ECO:0000250"/>
    <property type="project" value="UniProtKB"/>
</dbReference>
<dbReference type="GO" id="GO:0042974">
    <property type="term" value="F:nuclear retinoic acid receptor binding"/>
    <property type="evidence" value="ECO:0000250"/>
    <property type="project" value="UniProtKB"/>
</dbReference>
<dbReference type="GO" id="GO:0042809">
    <property type="term" value="F:nuclear vitamin D receptor binding"/>
    <property type="evidence" value="ECO:0000250"/>
    <property type="project" value="UniProtKB"/>
</dbReference>
<dbReference type="GO" id="GO:0046332">
    <property type="term" value="F:SMAD binding"/>
    <property type="evidence" value="ECO:0000250"/>
    <property type="project" value="UniProtKB"/>
</dbReference>
<dbReference type="GO" id="GO:0003713">
    <property type="term" value="F:transcription coactivator activity"/>
    <property type="evidence" value="ECO:0000250"/>
    <property type="project" value="UniProtKB"/>
</dbReference>
<dbReference type="GO" id="GO:0003714">
    <property type="term" value="F:transcription corepressor activity"/>
    <property type="evidence" value="ECO:0000250"/>
    <property type="project" value="UniProtKB"/>
</dbReference>
<dbReference type="GO" id="GO:0071300">
    <property type="term" value="P:cellular response to retinoic acid"/>
    <property type="evidence" value="ECO:0000314"/>
    <property type="project" value="UniProtKB"/>
</dbReference>
<dbReference type="GO" id="GO:0042771">
    <property type="term" value="P:intrinsic apoptotic signaling pathway in response to DNA damage by p53 class mediator"/>
    <property type="evidence" value="ECO:0000250"/>
    <property type="project" value="UniProtKB"/>
</dbReference>
<dbReference type="GO" id="GO:0000398">
    <property type="term" value="P:mRNA splicing, via spliceosome"/>
    <property type="evidence" value="ECO:0000250"/>
    <property type="project" value="UniProtKB"/>
</dbReference>
<dbReference type="GO" id="GO:0045892">
    <property type="term" value="P:negative regulation of DNA-templated transcription"/>
    <property type="evidence" value="ECO:0000266"/>
    <property type="project" value="MGI"/>
</dbReference>
<dbReference type="GO" id="GO:0000122">
    <property type="term" value="P:negative regulation of transcription by RNA polymerase II"/>
    <property type="evidence" value="ECO:0000250"/>
    <property type="project" value="UniProtKB"/>
</dbReference>
<dbReference type="GO" id="GO:0048026">
    <property type="term" value="P:positive regulation of mRNA splicing, via spliceosome"/>
    <property type="evidence" value="ECO:0000250"/>
    <property type="project" value="UniProtKB"/>
</dbReference>
<dbReference type="GO" id="GO:0050769">
    <property type="term" value="P:positive regulation of neurogenesis"/>
    <property type="evidence" value="ECO:0000314"/>
    <property type="project" value="UniProtKB"/>
</dbReference>
<dbReference type="GO" id="GO:0045944">
    <property type="term" value="P:positive regulation of transcription by RNA polymerase II"/>
    <property type="evidence" value="ECO:0000250"/>
    <property type="project" value="UniProtKB"/>
</dbReference>
<dbReference type="GO" id="GO:0030511">
    <property type="term" value="P:positive regulation of transforming growth factor beta receptor signaling pathway"/>
    <property type="evidence" value="ECO:0000250"/>
    <property type="project" value="UniProtKB"/>
</dbReference>
<dbReference type="GO" id="GO:0048385">
    <property type="term" value="P:regulation of retinoic acid receptor signaling pathway"/>
    <property type="evidence" value="ECO:0000250"/>
    <property type="project" value="UniProtKB"/>
</dbReference>
<dbReference type="GO" id="GO:0070562">
    <property type="term" value="P:regulation of vitamin D receptor signaling pathway"/>
    <property type="evidence" value="ECO:0000250"/>
    <property type="project" value="UniProtKB"/>
</dbReference>
<dbReference type="GO" id="GO:0048384">
    <property type="term" value="P:retinoic acid receptor signaling pathway"/>
    <property type="evidence" value="ECO:0000250"/>
    <property type="project" value="UniProtKB"/>
</dbReference>
<dbReference type="GO" id="GO:0035914">
    <property type="term" value="P:skeletal muscle cell differentiation"/>
    <property type="evidence" value="ECO:0000315"/>
    <property type="project" value="MGI"/>
</dbReference>
<dbReference type="InterPro" id="IPR017862">
    <property type="entry name" value="SKI-int_prot_SKIP"/>
</dbReference>
<dbReference type="InterPro" id="IPR004015">
    <property type="entry name" value="SKI-int_prot_SKIP_SNW-dom"/>
</dbReference>
<dbReference type="PANTHER" id="PTHR12096">
    <property type="entry name" value="NUCLEAR PROTEIN SKIP-RELATED"/>
    <property type="match status" value="1"/>
</dbReference>
<dbReference type="Pfam" id="PF02731">
    <property type="entry name" value="SKIP_SNW"/>
    <property type="match status" value="1"/>
</dbReference>
<accession>Q9CSN1</accession>
<organism>
    <name type="scientific">Mus musculus</name>
    <name type="common">Mouse</name>
    <dbReference type="NCBI Taxonomy" id="10090"/>
    <lineage>
        <taxon>Eukaryota</taxon>
        <taxon>Metazoa</taxon>
        <taxon>Chordata</taxon>
        <taxon>Craniata</taxon>
        <taxon>Vertebrata</taxon>
        <taxon>Euteleostomi</taxon>
        <taxon>Mammalia</taxon>
        <taxon>Eutheria</taxon>
        <taxon>Euarchontoglires</taxon>
        <taxon>Glires</taxon>
        <taxon>Rodentia</taxon>
        <taxon>Myomorpha</taxon>
        <taxon>Muroidea</taxon>
        <taxon>Muridae</taxon>
        <taxon>Murinae</taxon>
        <taxon>Mus</taxon>
        <taxon>Mus</taxon>
    </lineage>
</organism>
<proteinExistence type="evidence at protein level"/>
<name>SNW1_MOUSE</name>
<comment type="function">
    <text evidence="2">Involved in pre-mRNA splicing as component of the spliceosome. As a component of the minor spliceosome, involved in the splicing of U12-type introns in pre-mRNAs (By similarity). Required in the specific splicing of CDKN1A pre-mRNA; the function probably involves the recruitment of U2AF2 to the mRNA. May recruit PPIL1 to the spliceosome. May be involved in cyclin-D1/CCND1 mRNA stability through the SNARP complex which associates with both the 3'end of the CCND1 gene and its mRNA. Involved in transcriptional regulation. Modulates TGF-beta-mediated transcription via association with SMAD proteins, MYOD1-mediated transcription via association with PABPN1, RB1-mediated transcriptional repression, and retinoid-X receptor (RXR)- and vitamin D receptor (VDR)-dependent gene transcription in a cell line-specific manner probably involving coactivators NCOA1 and GRIP1. Is involved in NOTCH1-mediated transcriptional activation. Binds to multimerized forms of Notch intracellular domain (NICD) and is proposed to recruit transcriptional coactivators such as MAML1 to form an intermediate preactivation complex which associates with DNA-bound CBF-1/RBPJ to form a transcriptional activation complex by releasing SNW1 and redundant NOTCH1 NICD.</text>
</comment>
<comment type="subunit">
    <text evidence="2 4 5">Identified in the spliceosome C complex (By similarity). Associates with U4/U6-U5 tri-small nuclear ribonucleoproteins (U4/U6-U5 tri-snRNPs). Component of the minor spliceosome, which splices U12-type introns (By similarity). Interacts with SKI, SMAD2,SMAD3, RBPJ, RB1, PABPN1, MAGEA1, SIRT1, FOXN3, U2AF2, PPIL1, DAXX and ATP1B4. Interacts with VDR and RXRA; preferentially associates with VDR:RXRA heterodimers. Interacts with NCOR2. Interacts with MAML1. Interacts with NOTCH1 NICD; the interaction involves multimerized NOTCH1 NICD. Forms a complex with NOTCH1 NICD and MAML1; the association is dissociated by RBPJ. Associates with positive transcription elongation factor b (P-TEFb). Component of the SNARP complex which consists at least of SNIP1, SNW1, THRAP3, BCLAF1 and PNN (By similarity).</text>
</comment>
<comment type="interaction">
    <interactant intactId="EBI-2551848">
        <id>Q9CSN1</id>
    </interactant>
    <interactant intactId="EBI-12894731">
        <id>Q9UN42</id>
        <label>ATP1B4</label>
    </interactant>
    <organismsDiffer>true</organismsDiffer>
    <experiments>2</experiments>
</comment>
<comment type="subcellular location">
    <subcellularLocation>
        <location evidence="2">Nucleus</location>
    </subcellularLocation>
</comment>
<comment type="similarity">
    <text evidence="6">Belongs to the SNW family.</text>
</comment>
<evidence type="ECO:0000250" key="1"/>
<evidence type="ECO:0000250" key="2">
    <source>
        <dbReference type="UniProtKB" id="Q13573"/>
    </source>
</evidence>
<evidence type="ECO:0000256" key="3">
    <source>
        <dbReference type="SAM" id="MobiDB-lite"/>
    </source>
</evidence>
<evidence type="ECO:0000269" key="4">
    <source>
    </source>
</evidence>
<evidence type="ECO:0000269" key="5">
    <source>
    </source>
</evidence>
<evidence type="ECO:0000305" key="6"/>
<evidence type="ECO:0007744" key="7">
    <source>
    </source>
</evidence>
<evidence type="ECO:0007744" key="8">
    <source>
    </source>
</evidence>
<evidence type="ECO:0007744" key="9">
    <source>
    </source>
</evidence>
<feature type="initiator methionine" description="Removed" evidence="2">
    <location>
        <position position="1"/>
    </location>
</feature>
<feature type="chain" id="PRO_0000084828" description="SNW domain-containing protein 1">
    <location>
        <begin position="2"/>
        <end position="536"/>
    </location>
</feature>
<feature type="region of interest" description="Disordered" evidence="3">
    <location>
        <begin position="1"/>
        <end position="44"/>
    </location>
</feature>
<feature type="region of interest" description="Interaction with PPIL1" evidence="1">
    <location>
        <begin position="59"/>
        <end position="79"/>
    </location>
</feature>
<feature type="region of interest" description="SNW">
    <location>
        <begin position="174"/>
        <end position="339"/>
    </location>
</feature>
<feature type="region of interest" description="Disordered" evidence="3">
    <location>
        <begin position="212"/>
        <end position="233"/>
    </location>
</feature>
<feature type="region of interest" description="Disordered" evidence="3">
    <location>
        <begin position="311"/>
        <end position="386"/>
    </location>
</feature>
<feature type="region of interest" description="Disordered" evidence="3">
    <location>
        <begin position="467"/>
        <end position="536"/>
    </location>
</feature>
<feature type="compositionally biased region" description="Polar residues" evidence="3">
    <location>
        <begin position="27"/>
        <end position="36"/>
    </location>
</feature>
<feature type="compositionally biased region" description="Basic and acidic residues" evidence="3">
    <location>
        <begin position="467"/>
        <end position="489"/>
    </location>
</feature>
<feature type="compositionally biased region" description="Basic and acidic residues" evidence="3">
    <location>
        <begin position="503"/>
        <end position="530"/>
    </location>
</feature>
<feature type="modified residue" description="N-acetylalanine" evidence="2">
    <location>
        <position position="2"/>
    </location>
</feature>
<feature type="modified residue" description="Phosphoserine" evidence="2">
    <location>
        <position position="14"/>
    </location>
</feature>
<feature type="modified residue" description="Phosphoserine" evidence="2">
    <location>
        <position position="182"/>
    </location>
</feature>
<feature type="modified residue" description="Phosphoserine" evidence="2">
    <location>
        <position position="190"/>
    </location>
</feature>
<feature type="modified residue" description="Phosphoserine" evidence="4 7 8 9">
    <location>
        <position position="224"/>
    </location>
</feature>
<feature type="modified residue" description="Phosphoserine" evidence="7 8 9">
    <location>
        <position position="232"/>
    </location>
</feature>
<feature type="modified residue" description="Phosphoserine" evidence="2">
    <location>
        <position position="234"/>
    </location>
</feature>
<feature type="modified residue" description="Phosphoserine" evidence="2">
    <location>
        <position position="446"/>
    </location>
</feature>
<feature type="modified residue" description="Phosphoserine" evidence="2">
    <location>
        <position position="479"/>
    </location>
</feature>
<feature type="modified residue" description="Phosphoserine" evidence="2">
    <location>
        <position position="481"/>
    </location>
</feature>
<feature type="cross-link" description="Glycyl lysine isopeptide (Lys-Gly) (interchain with G-Cter in SUMO2)" evidence="2">
    <location>
        <position position="81"/>
    </location>
</feature>
<feature type="cross-link" description="Glycyl lysine isopeptide (Lys-Gly) (interchain with G-Cter in SUMO2)" evidence="2">
    <location>
        <position position="97"/>
    </location>
</feature>
<feature type="cross-link" description="Glycyl lysine isopeptide (Lys-Gly) (interchain with G-Cter in SUMO2)" evidence="2">
    <location>
        <position position="115"/>
    </location>
</feature>
<feature type="cross-link" description="Glycyl lysine isopeptide (Lys-Gly) (interchain with G-Cter in SUMO2)" evidence="2">
    <location>
        <position position="122"/>
    </location>
</feature>
<feature type="cross-link" description="Glycyl lysine isopeptide (Lys-Gly) (interchain with G-Cter in SUMO2)" evidence="2">
    <location>
        <position position="141"/>
    </location>
</feature>
<feature type="cross-link" description="Glycyl lysine isopeptide (Lys-Gly) (interchain with G-Cter in SUMO2)" evidence="2">
    <location>
        <position position="158"/>
    </location>
</feature>
<feature type="cross-link" description="Glycyl lysine isopeptide (Lys-Gly) (interchain with G-Cter in SUMO2)" evidence="2">
    <location>
        <position position="170"/>
    </location>
</feature>
<feature type="cross-link" description="Glycyl lysine isopeptide (Lys-Gly) (interchain with G-Cter in SUMO2)" evidence="2">
    <location>
        <position position="193"/>
    </location>
</feature>
<feature type="cross-link" description="Glycyl lysine isopeptide (Lys-Gly) (interchain with G-Cter in SUMO2)" evidence="2">
    <location>
        <position position="240"/>
    </location>
</feature>
<feature type="cross-link" description="Glycyl lysine isopeptide (Lys-Gly) (interchain with G-Cter in SUMO2)" evidence="2">
    <location>
        <position position="258"/>
    </location>
</feature>
<feature type="cross-link" description="Glycyl lysine isopeptide (Lys-Gly) (interchain with G-Cter in SUMO2)" evidence="2">
    <location>
        <position position="286"/>
    </location>
</feature>
<feature type="cross-link" description="Glycyl lysine isopeptide (Lys-Gly) (interchain with G-Cter in SUMO2)" evidence="2">
    <location>
        <position position="339"/>
    </location>
</feature>
<feature type="cross-link" description="Glycyl lysine isopeptide (Lys-Gly) (interchain with G-Cter in SUMO2)" evidence="2">
    <location>
        <position position="344"/>
    </location>
</feature>
<feature type="cross-link" description="Glycyl lysine isopeptide (Lys-Gly) (interchain with G-Cter in SUMO2)" evidence="2">
    <location>
        <position position="416"/>
    </location>
</feature>
<feature type="cross-link" description="Glycyl lysine isopeptide (Lys-Gly) (interchain with G-Cter in SUMO2)" evidence="2">
    <location>
        <position position="441"/>
    </location>
</feature>
<feature type="cross-link" description="Glycyl lysine isopeptide (Lys-Gly) (interchain with G-Cter in SUMO2)" evidence="2">
    <location>
        <position position="452"/>
    </location>
</feature>
<feature type="cross-link" description="Glycyl lysine isopeptide (Lys-Gly) (interchain with G-Cter in SUMO2)" evidence="2">
    <location>
        <position position="509"/>
    </location>
</feature>
<keyword id="KW-0007">Acetylation</keyword>
<keyword id="KW-1017">Isopeptide bond</keyword>
<keyword id="KW-0507">mRNA processing</keyword>
<keyword id="KW-0508">mRNA splicing</keyword>
<keyword id="KW-0539">Nucleus</keyword>
<keyword id="KW-0597">Phosphoprotein</keyword>
<keyword id="KW-1185">Reference proteome</keyword>
<keyword id="KW-0747">Spliceosome</keyword>
<keyword id="KW-0804">Transcription</keyword>
<keyword id="KW-0805">Transcription regulation</keyword>
<keyword id="KW-0832">Ubl conjugation</keyword>
<gene>
    <name type="primary">Snw1</name>
    <name type="synonym">Skiip</name>
</gene>
<protein>
    <recommendedName>
        <fullName>SNW domain-containing protein 1</fullName>
    </recommendedName>
    <alternativeName>
        <fullName>Nuclear protein SkiP</fullName>
    </alternativeName>
    <alternativeName>
        <fullName>Ski-interacting protein</fullName>
    </alternativeName>
</protein>